<evidence type="ECO:0000255" key="1">
    <source>
        <dbReference type="HAMAP-Rule" id="MF_00489"/>
    </source>
</evidence>
<feature type="chain" id="PRO_0000176009" description="UPF0178 protein SAR0734">
    <location>
        <begin position="1"/>
        <end position="152"/>
    </location>
</feature>
<organism>
    <name type="scientific">Staphylococcus aureus (strain MRSA252)</name>
    <dbReference type="NCBI Taxonomy" id="282458"/>
    <lineage>
        <taxon>Bacteria</taxon>
        <taxon>Bacillati</taxon>
        <taxon>Bacillota</taxon>
        <taxon>Bacilli</taxon>
        <taxon>Bacillales</taxon>
        <taxon>Staphylococcaceae</taxon>
        <taxon>Staphylococcus</taxon>
    </lineage>
</organism>
<gene>
    <name type="ordered locus">SAR0734</name>
</gene>
<accession>Q6GIW1</accession>
<reference key="1">
    <citation type="journal article" date="2004" name="Proc. Natl. Acad. Sci. U.S.A.">
        <title>Complete genomes of two clinical Staphylococcus aureus strains: evidence for the rapid evolution of virulence and drug resistance.</title>
        <authorList>
            <person name="Holden M.T.G."/>
            <person name="Feil E.J."/>
            <person name="Lindsay J.A."/>
            <person name="Peacock S.J."/>
            <person name="Day N.P.J."/>
            <person name="Enright M.C."/>
            <person name="Foster T.J."/>
            <person name="Moore C.E."/>
            <person name="Hurst L."/>
            <person name="Atkin R."/>
            <person name="Barron A."/>
            <person name="Bason N."/>
            <person name="Bentley S.D."/>
            <person name="Chillingworth C."/>
            <person name="Chillingworth T."/>
            <person name="Churcher C."/>
            <person name="Clark L."/>
            <person name="Corton C."/>
            <person name="Cronin A."/>
            <person name="Doggett J."/>
            <person name="Dowd L."/>
            <person name="Feltwell T."/>
            <person name="Hance Z."/>
            <person name="Harris B."/>
            <person name="Hauser H."/>
            <person name="Holroyd S."/>
            <person name="Jagels K."/>
            <person name="James K.D."/>
            <person name="Lennard N."/>
            <person name="Line A."/>
            <person name="Mayes R."/>
            <person name="Moule S."/>
            <person name="Mungall K."/>
            <person name="Ormond D."/>
            <person name="Quail M.A."/>
            <person name="Rabbinowitsch E."/>
            <person name="Rutherford K.M."/>
            <person name="Sanders M."/>
            <person name="Sharp S."/>
            <person name="Simmonds M."/>
            <person name="Stevens K."/>
            <person name="Whitehead S."/>
            <person name="Barrell B.G."/>
            <person name="Spratt B.G."/>
            <person name="Parkhill J."/>
        </authorList>
    </citation>
    <scope>NUCLEOTIDE SEQUENCE [LARGE SCALE GENOMIC DNA]</scope>
    <source>
        <strain>MRSA252</strain>
    </source>
</reference>
<sequence length="152" mass="17300">MTHIIIDGDACPVVDSIIDLTTETGIFVTIIRSFSHFSNQLYPPHVSTLYVDDGPDAVDYKIVQLSTKDDIVITQDYGLASLLVDKVLIVMHHNGKIYNSKNIQQLLDKRYMNAQIRKQGGRHKGPPPFTKQDQKVFEKSLLRVIHRIKELD</sequence>
<dbReference type="EMBL" id="BX571856">
    <property type="protein sequence ID" value="CAG39744.1"/>
    <property type="molecule type" value="Genomic_DNA"/>
</dbReference>
<dbReference type="RefSeq" id="WP_000148821.1">
    <property type="nucleotide sequence ID" value="NC_002952.2"/>
</dbReference>
<dbReference type="SMR" id="Q6GIW1"/>
<dbReference type="KEGG" id="sar:SAR0734"/>
<dbReference type="HOGENOM" id="CLU_106619_0_0_9"/>
<dbReference type="Proteomes" id="UP000000596">
    <property type="component" value="Chromosome"/>
</dbReference>
<dbReference type="HAMAP" id="MF_00489">
    <property type="entry name" value="UPF0178"/>
    <property type="match status" value="1"/>
</dbReference>
<dbReference type="InterPro" id="IPR003791">
    <property type="entry name" value="UPF0178"/>
</dbReference>
<dbReference type="NCBIfam" id="NF001095">
    <property type="entry name" value="PRK00124.1"/>
    <property type="match status" value="1"/>
</dbReference>
<dbReference type="PANTHER" id="PTHR35146">
    <property type="entry name" value="UPF0178 PROTEIN YAII"/>
    <property type="match status" value="1"/>
</dbReference>
<dbReference type="PANTHER" id="PTHR35146:SF1">
    <property type="entry name" value="UPF0178 PROTEIN YAII"/>
    <property type="match status" value="1"/>
</dbReference>
<dbReference type="Pfam" id="PF02639">
    <property type="entry name" value="DUF188"/>
    <property type="match status" value="1"/>
</dbReference>
<comment type="similarity">
    <text evidence="1">Belongs to the UPF0178 family.</text>
</comment>
<name>Y734_STAAR</name>
<proteinExistence type="inferred from homology"/>
<protein>
    <recommendedName>
        <fullName evidence="1">UPF0178 protein SAR0734</fullName>
    </recommendedName>
</protein>